<keyword id="KW-0150">Chloroplast</keyword>
<keyword id="KW-0507">mRNA processing</keyword>
<keyword id="KW-0934">Plastid</keyword>
<keyword id="KW-1185">Reference proteome</keyword>
<keyword id="KW-0677">Repeat</keyword>
<keyword id="KW-0687">Ribonucleoprotein</keyword>
<keyword id="KW-0694">RNA-binding</keyword>
<keyword id="KW-0809">Transit peptide</keyword>
<protein>
    <recommendedName>
        <fullName>29 kDa ribonucleoprotein A, chloroplastic</fullName>
    </recommendedName>
    <alternativeName>
        <fullName>CP29A</fullName>
    </alternativeName>
</protein>
<accession>Q08935</accession>
<comment type="function">
    <text>Could be involved in splicing and/or processing of chloroplast RNA's.</text>
</comment>
<comment type="subcellular location">
    <subcellularLocation>
        <location>Plastid</location>
        <location>Chloroplast</location>
    </subcellularLocation>
</comment>
<feature type="transit peptide" description="Chloroplast" evidence="1">
    <location>
        <begin position="1"/>
        <end position="58"/>
    </location>
</feature>
<feature type="chain" id="PRO_0000031025" description="29 kDa ribonucleoprotein A, chloroplastic">
    <location>
        <begin position="59"/>
        <end position="273"/>
    </location>
</feature>
<feature type="domain" description="RRM 1" evidence="2">
    <location>
        <begin position="87"/>
        <end position="165"/>
    </location>
</feature>
<feature type="domain" description="RRM 2" evidence="2">
    <location>
        <begin position="188"/>
        <end position="266"/>
    </location>
</feature>
<feature type="region of interest" description="Disordered" evidence="3">
    <location>
        <begin position="156"/>
        <end position="181"/>
    </location>
</feature>
<feature type="region of interest" description="Linker (Gly-rich)">
    <location>
        <begin position="166"/>
        <end position="187"/>
    </location>
</feature>
<name>ROC1_NICSY</name>
<evidence type="ECO:0000255" key="1"/>
<evidence type="ECO:0000255" key="2">
    <source>
        <dbReference type="PROSITE-ProRule" id="PRU00176"/>
    </source>
</evidence>
<evidence type="ECO:0000256" key="3">
    <source>
        <dbReference type="SAM" id="MobiDB-lite"/>
    </source>
</evidence>
<organism>
    <name type="scientific">Nicotiana sylvestris</name>
    <name type="common">Wood tobacco</name>
    <name type="synonym">South American tobacco</name>
    <dbReference type="NCBI Taxonomy" id="4096"/>
    <lineage>
        <taxon>Eukaryota</taxon>
        <taxon>Viridiplantae</taxon>
        <taxon>Streptophyta</taxon>
        <taxon>Embryophyta</taxon>
        <taxon>Tracheophyta</taxon>
        <taxon>Spermatophyta</taxon>
        <taxon>Magnoliopsida</taxon>
        <taxon>eudicotyledons</taxon>
        <taxon>Gunneridae</taxon>
        <taxon>Pentapetalae</taxon>
        <taxon>asterids</taxon>
        <taxon>lamiids</taxon>
        <taxon>Solanales</taxon>
        <taxon>Solanaceae</taxon>
        <taxon>Nicotianoideae</taxon>
        <taxon>Nicotianeae</taxon>
        <taxon>Nicotiana</taxon>
    </lineage>
</organism>
<sequence>MASSASSLHFLSLTPQTLPLPKPTSQTTSLSFFSLPPSSLNLSLSSSSSCFSSRFVRKVTLSDFDQIEDVEDGDDGVEEERNFSPDLKIFVGNLPFSADSAALAELFERAGNVEMVEVIYDKLTGRSRGFGFVTMSSKEEVEAACQQFNGYELDGRALRVNSGPPPEKRENSSFRGGSRGGGSFDSSNRVYVGNLAWGVDQDALETLFSEQGKVVDAKVVYDRDSGRSRGFGFVTYSSAEEVNNAIESLDGVDLNGRAIRVSPAEARPPRRQF</sequence>
<dbReference type="EMBL" id="X61113">
    <property type="protein sequence ID" value="CAA43427.1"/>
    <property type="molecule type" value="mRNA"/>
</dbReference>
<dbReference type="PIR" id="S20069">
    <property type="entry name" value="S20069"/>
</dbReference>
<dbReference type="RefSeq" id="NP_001289491.1">
    <property type="nucleotide sequence ID" value="NM_001302562.1"/>
</dbReference>
<dbReference type="RefSeq" id="XP_009781507.1">
    <property type="nucleotide sequence ID" value="XM_009783205.2"/>
</dbReference>
<dbReference type="SMR" id="Q08935"/>
<dbReference type="STRING" id="4096.Q08935"/>
<dbReference type="GeneID" id="104230409"/>
<dbReference type="KEGG" id="nsy:104230409"/>
<dbReference type="eggNOG" id="KOG0118">
    <property type="taxonomic scope" value="Eukaryota"/>
</dbReference>
<dbReference type="Proteomes" id="UP000189701">
    <property type="component" value="Unplaced"/>
</dbReference>
<dbReference type="GO" id="GO:0009535">
    <property type="term" value="C:chloroplast thylakoid membrane"/>
    <property type="evidence" value="ECO:0007669"/>
    <property type="project" value="TreeGrafter"/>
</dbReference>
<dbReference type="GO" id="GO:1990904">
    <property type="term" value="C:ribonucleoprotein complex"/>
    <property type="evidence" value="ECO:0007669"/>
    <property type="project" value="UniProtKB-KW"/>
</dbReference>
<dbReference type="GO" id="GO:0003729">
    <property type="term" value="F:mRNA binding"/>
    <property type="evidence" value="ECO:0007669"/>
    <property type="project" value="TreeGrafter"/>
</dbReference>
<dbReference type="GO" id="GO:1901259">
    <property type="term" value="P:chloroplast rRNA processing"/>
    <property type="evidence" value="ECO:0007669"/>
    <property type="project" value="TreeGrafter"/>
</dbReference>
<dbReference type="GO" id="GO:0006397">
    <property type="term" value="P:mRNA processing"/>
    <property type="evidence" value="ECO:0007669"/>
    <property type="project" value="UniProtKB-KW"/>
</dbReference>
<dbReference type="CDD" id="cd21608">
    <property type="entry name" value="RRM2_NsCP33_like"/>
    <property type="match status" value="1"/>
</dbReference>
<dbReference type="FunFam" id="3.30.70.330:FF:000361">
    <property type="entry name" value="28 kDa ribonucleoprotein, chloroplastic"/>
    <property type="match status" value="1"/>
</dbReference>
<dbReference type="Gene3D" id="3.30.70.330">
    <property type="match status" value="2"/>
</dbReference>
<dbReference type="InterPro" id="IPR050502">
    <property type="entry name" value="Euk_RNA-bind_prot"/>
</dbReference>
<dbReference type="InterPro" id="IPR012677">
    <property type="entry name" value="Nucleotide-bd_a/b_plait_sf"/>
</dbReference>
<dbReference type="InterPro" id="IPR035979">
    <property type="entry name" value="RBD_domain_sf"/>
</dbReference>
<dbReference type="InterPro" id="IPR048289">
    <property type="entry name" value="RRM2_NsCP33-like"/>
</dbReference>
<dbReference type="InterPro" id="IPR000504">
    <property type="entry name" value="RRM_dom"/>
</dbReference>
<dbReference type="PANTHER" id="PTHR48025">
    <property type="entry name" value="OS02G0815200 PROTEIN"/>
    <property type="match status" value="1"/>
</dbReference>
<dbReference type="PANTHER" id="PTHR48025:SF1">
    <property type="entry name" value="RRM DOMAIN-CONTAINING PROTEIN"/>
    <property type="match status" value="1"/>
</dbReference>
<dbReference type="Pfam" id="PF00076">
    <property type="entry name" value="RRM_1"/>
    <property type="match status" value="2"/>
</dbReference>
<dbReference type="SMART" id="SM00360">
    <property type="entry name" value="RRM"/>
    <property type="match status" value="2"/>
</dbReference>
<dbReference type="SUPFAM" id="SSF54928">
    <property type="entry name" value="RNA-binding domain, RBD"/>
    <property type="match status" value="2"/>
</dbReference>
<dbReference type="PROSITE" id="PS50102">
    <property type="entry name" value="RRM"/>
    <property type="match status" value="2"/>
</dbReference>
<proteinExistence type="evidence at transcript level"/>
<reference key="1">
    <citation type="journal article" date="1991" name="Nucleic Acids Res.">
        <title>Diversity of a ribonucleoprotein family in tobacco chloroplasts: two new chloroplast ribonucleoproteins and a phylogenetic tree of ten chloroplast RNA-binding domains.</title>
        <authorList>
            <person name="Ye L."/>
            <person name="Li Y."/>
            <person name="Fukami-Kobayashi F."/>
            <person name="Go M."/>
            <person name="Konishi T."/>
            <person name="Watanbe A."/>
            <person name="Sugiura M."/>
        </authorList>
    </citation>
    <scope>NUCLEOTIDE SEQUENCE [MRNA]</scope>
    <source>
        <tissue>Leaf</tissue>
    </source>
</reference>